<gene>
    <name evidence="1" type="primary">rpsJ</name>
    <name evidence="1" type="synonym">rps10</name>
    <name type="ordered locus">cce_4087</name>
</gene>
<keyword id="KW-1185">Reference proteome</keyword>
<keyword id="KW-0687">Ribonucleoprotein</keyword>
<keyword id="KW-0689">Ribosomal protein</keyword>
<proteinExistence type="inferred from homology"/>
<evidence type="ECO:0000255" key="1">
    <source>
        <dbReference type="HAMAP-Rule" id="MF_00508"/>
    </source>
</evidence>
<evidence type="ECO:0000305" key="2"/>
<organism>
    <name type="scientific">Crocosphaera subtropica (strain ATCC 51142 / BH68)</name>
    <name type="common">Cyanothece sp. (strain ATCC 51142)</name>
    <dbReference type="NCBI Taxonomy" id="43989"/>
    <lineage>
        <taxon>Bacteria</taxon>
        <taxon>Bacillati</taxon>
        <taxon>Cyanobacteriota</taxon>
        <taxon>Cyanophyceae</taxon>
        <taxon>Oscillatoriophycideae</taxon>
        <taxon>Chroococcales</taxon>
        <taxon>Aphanothecaceae</taxon>
        <taxon>Crocosphaera</taxon>
        <taxon>Crocosphaera subtropica</taxon>
    </lineage>
</organism>
<comment type="function">
    <text evidence="1">Involved in the binding of tRNA to the ribosomes.</text>
</comment>
<comment type="subunit">
    <text evidence="1">Part of the 30S ribosomal subunit.</text>
</comment>
<comment type="similarity">
    <text evidence="1">Belongs to the universal ribosomal protein uS10 family.</text>
</comment>
<dbReference type="EMBL" id="CP000806">
    <property type="protein sequence ID" value="ACB53435.1"/>
    <property type="molecule type" value="Genomic_DNA"/>
</dbReference>
<dbReference type="RefSeq" id="WP_007304701.1">
    <property type="nucleotide sequence ID" value="NC_010546.1"/>
</dbReference>
<dbReference type="SMR" id="B1WQY3"/>
<dbReference type="STRING" id="43989.cce_4087"/>
<dbReference type="GeneID" id="88765477"/>
<dbReference type="KEGG" id="cyt:cce_4087"/>
<dbReference type="eggNOG" id="COG0051">
    <property type="taxonomic scope" value="Bacteria"/>
</dbReference>
<dbReference type="HOGENOM" id="CLU_122625_1_3_3"/>
<dbReference type="OrthoDB" id="9804464at2"/>
<dbReference type="Proteomes" id="UP000001203">
    <property type="component" value="Chromosome circular"/>
</dbReference>
<dbReference type="GO" id="GO:1990904">
    <property type="term" value="C:ribonucleoprotein complex"/>
    <property type="evidence" value="ECO:0007669"/>
    <property type="project" value="UniProtKB-KW"/>
</dbReference>
<dbReference type="GO" id="GO:0005840">
    <property type="term" value="C:ribosome"/>
    <property type="evidence" value="ECO:0007669"/>
    <property type="project" value="UniProtKB-KW"/>
</dbReference>
<dbReference type="GO" id="GO:0003735">
    <property type="term" value="F:structural constituent of ribosome"/>
    <property type="evidence" value="ECO:0007669"/>
    <property type="project" value="InterPro"/>
</dbReference>
<dbReference type="GO" id="GO:0000049">
    <property type="term" value="F:tRNA binding"/>
    <property type="evidence" value="ECO:0007669"/>
    <property type="project" value="UniProtKB-UniRule"/>
</dbReference>
<dbReference type="GO" id="GO:0006412">
    <property type="term" value="P:translation"/>
    <property type="evidence" value="ECO:0007669"/>
    <property type="project" value="UniProtKB-UniRule"/>
</dbReference>
<dbReference type="FunFam" id="3.30.70.600:FF:000001">
    <property type="entry name" value="30S ribosomal protein S10"/>
    <property type="match status" value="1"/>
</dbReference>
<dbReference type="Gene3D" id="3.30.70.600">
    <property type="entry name" value="Ribosomal protein S10 domain"/>
    <property type="match status" value="1"/>
</dbReference>
<dbReference type="HAMAP" id="MF_00508">
    <property type="entry name" value="Ribosomal_uS10"/>
    <property type="match status" value="1"/>
</dbReference>
<dbReference type="InterPro" id="IPR001848">
    <property type="entry name" value="Ribosomal_uS10"/>
</dbReference>
<dbReference type="InterPro" id="IPR018268">
    <property type="entry name" value="Ribosomal_uS10_CS"/>
</dbReference>
<dbReference type="InterPro" id="IPR027486">
    <property type="entry name" value="Ribosomal_uS10_dom"/>
</dbReference>
<dbReference type="InterPro" id="IPR036838">
    <property type="entry name" value="Ribosomal_uS10_dom_sf"/>
</dbReference>
<dbReference type="NCBIfam" id="NF001861">
    <property type="entry name" value="PRK00596.1"/>
    <property type="match status" value="1"/>
</dbReference>
<dbReference type="NCBIfam" id="TIGR01049">
    <property type="entry name" value="rpsJ_bact"/>
    <property type="match status" value="1"/>
</dbReference>
<dbReference type="PANTHER" id="PTHR11700">
    <property type="entry name" value="30S RIBOSOMAL PROTEIN S10 FAMILY MEMBER"/>
    <property type="match status" value="1"/>
</dbReference>
<dbReference type="Pfam" id="PF00338">
    <property type="entry name" value="Ribosomal_S10"/>
    <property type="match status" value="1"/>
</dbReference>
<dbReference type="PRINTS" id="PR00971">
    <property type="entry name" value="RIBOSOMALS10"/>
</dbReference>
<dbReference type="SMART" id="SM01403">
    <property type="entry name" value="Ribosomal_S10"/>
    <property type="match status" value="1"/>
</dbReference>
<dbReference type="SUPFAM" id="SSF54999">
    <property type="entry name" value="Ribosomal protein S10"/>
    <property type="match status" value="1"/>
</dbReference>
<dbReference type="PROSITE" id="PS00361">
    <property type="entry name" value="RIBOSOMAL_S10"/>
    <property type="match status" value="1"/>
</dbReference>
<sequence length="105" mass="12081">MATLAQQKIRIRLKAFDRRLLDTSCEKIVDTANRTDATAIGPIPLPTKRRIYCVLRSPHVDKDSREHFETRTHRRIIDIYQPSSKTIDALMKLDLPAGVEIEVKL</sequence>
<accession>B1WQY3</accession>
<protein>
    <recommendedName>
        <fullName evidence="1">Small ribosomal subunit protein uS10</fullName>
    </recommendedName>
    <alternativeName>
        <fullName evidence="2">30S ribosomal protein S10</fullName>
    </alternativeName>
</protein>
<name>RS10_CROS5</name>
<feature type="chain" id="PRO_1000196303" description="Small ribosomal subunit protein uS10">
    <location>
        <begin position="1"/>
        <end position="105"/>
    </location>
</feature>
<reference key="1">
    <citation type="journal article" date="2008" name="Proc. Natl. Acad. Sci. U.S.A.">
        <title>The genome of Cyanothece 51142, a unicellular diazotrophic cyanobacterium important in the marine nitrogen cycle.</title>
        <authorList>
            <person name="Welsh E.A."/>
            <person name="Liberton M."/>
            <person name="Stoeckel J."/>
            <person name="Loh T."/>
            <person name="Elvitigala T."/>
            <person name="Wang C."/>
            <person name="Wollam A."/>
            <person name="Fulton R.S."/>
            <person name="Clifton S.W."/>
            <person name="Jacobs J.M."/>
            <person name="Aurora R."/>
            <person name="Ghosh B.K."/>
            <person name="Sherman L.A."/>
            <person name="Smith R.D."/>
            <person name="Wilson R.K."/>
            <person name="Pakrasi H.B."/>
        </authorList>
    </citation>
    <scope>NUCLEOTIDE SEQUENCE [LARGE SCALE GENOMIC DNA]</scope>
    <source>
        <strain>ATCC 51142 / BH68</strain>
    </source>
</reference>